<name>HIS4_CERSK</name>
<gene>
    <name evidence="1" type="primary">hisA</name>
    <name type="ordered locus">RSKD131_0562</name>
</gene>
<organism>
    <name type="scientific">Cereibacter sphaeroides (strain KD131 / KCTC 12085)</name>
    <name type="common">Rhodobacter sphaeroides</name>
    <dbReference type="NCBI Taxonomy" id="557760"/>
    <lineage>
        <taxon>Bacteria</taxon>
        <taxon>Pseudomonadati</taxon>
        <taxon>Pseudomonadota</taxon>
        <taxon>Alphaproteobacteria</taxon>
        <taxon>Rhodobacterales</taxon>
        <taxon>Paracoccaceae</taxon>
        <taxon>Cereibacter</taxon>
    </lineage>
</organism>
<protein>
    <recommendedName>
        <fullName evidence="1">1-(5-phosphoribosyl)-5-[(5-phosphoribosylamino)methylideneamino] imidazole-4-carboxamide isomerase</fullName>
        <ecNumber evidence="1">5.3.1.16</ecNumber>
    </recommendedName>
    <alternativeName>
        <fullName evidence="1">Phosphoribosylformimino-5-aminoimidazole carboxamide ribotide isomerase</fullName>
    </alternativeName>
</protein>
<dbReference type="EC" id="5.3.1.16" evidence="1"/>
<dbReference type="EMBL" id="CP001150">
    <property type="protein sequence ID" value="ACM00422.1"/>
    <property type="molecule type" value="Genomic_DNA"/>
</dbReference>
<dbReference type="RefSeq" id="WP_009566362.1">
    <property type="nucleotide sequence ID" value="NC_011963.1"/>
</dbReference>
<dbReference type="SMR" id="B9KPC9"/>
<dbReference type="GeneID" id="67446015"/>
<dbReference type="KEGG" id="rsk:RSKD131_0562"/>
<dbReference type="HOGENOM" id="CLU_048577_1_1_5"/>
<dbReference type="UniPathway" id="UPA00031">
    <property type="reaction ID" value="UER00009"/>
</dbReference>
<dbReference type="GO" id="GO:0005737">
    <property type="term" value="C:cytoplasm"/>
    <property type="evidence" value="ECO:0007669"/>
    <property type="project" value="UniProtKB-SubCell"/>
</dbReference>
<dbReference type="GO" id="GO:0003949">
    <property type="term" value="F:1-(5-phosphoribosyl)-5-[(5-phosphoribosylamino)methylideneamino]imidazole-4-carboxamide isomerase activity"/>
    <property type="evidence" value="ECO:0007669"/>
    <property type="project" value="UniProtKB-UniRule"/>
</dbReference>
<dbReference type="GO" id="GO:0000105">
    <property type="term" value="P:L-histidine biosynthetic process"/>
    <property type="evidence" value="ECO:0007669"/>
    <property type="project" value="UniProtKB-UniRule"/>
</dbReference>
<dbReference type="GO" id="GO:0000162">
    <property type="term" value="P:L-tryptophan biosynthetic process"/>
    <property type="evidence" value="ECO:0007669"/>
    <property type="project" value="TreeGrafter"/>
</dbReference>
<dbReference type="CDD" id="cd04732">
    <property type="entry name" value="HisA"/>
    <property type="match status" value="1"/>
</dbReference>
<dbReference type="FunFam" id="3.20.20.70:FF:000009">
    <property type="entry name" value="1-(5-phosphoribosyl)-5-[(5-phosphoribosylamino)methylideneamino] imidazole-4-carboxamide isomerase"/>
    <property type="match status" value="1"/>
</dbReference>
<dbReference type="Gene3D" id="3.20.20.70">
    <property type="entry name" value="Aldolase class I"/>
    <property type="match status" value="1"/>
</dbReference>
<dbReference type="HAMAP" id="MF_01014">
    <property type="entry name" value="HisA"/>
    <property type="match status" value="1"/>
</dbReference>
<dbReference type="InterPro" id="IPR013785">
    <property type="entry name" value="Aldolase_TIM"/>
</dbReference>
<dbReference type="InterPro" id="IPR006062">
    <property type="entry name" value="His_biosynth"/>
</dbReference>
<dbReference type="InterPro" id="IPR006063">
    <property type="entry name" value="HisA_bact_arch"/>
</dbReference>
<dbReference type="InterPro" id="IPR044524">
    <property type="entry name" value="Isoase_HisA-like"/>
</dbReference>
<dbReference type="InterPro" id="IPR023016">
    <property type="entry name" value="Isoase_HisA-like_bact"/>
</dbReference>
<dbReference type="InterPro" id="IPR011060">
    <property type="entry name" value="RibuloseP-bd_barrel"/>
</dbReference>
<dbReference type="NCBIfam" id="TIGR00007">
    <property type="entry name" value="1-(5-phosphoribosyl)-5-[(5-phosphoribosylamino)methylideneamino]imidazole-4-carboxamide isomerase"/>
    <property type="match status" value="1"/>
</dbReference>
<dbReference type="PANTHER" id="PTHR43090">
    <property type="entry name" value="1-(5-PHOSPHORIBOSYL)-5-[(5-PHOSPHORIBOSYLAMINO)METHYLIDENEAMINO] IMIDAZOLE-4-CARBOXAMIDE ISOMERASE"/>
    <property type="match status" value="1"/>
</dbReference>
<dbReference type="PANTHER" id="PTHR43090:SF2">
    <property type="entry name" value="1-(5-PHOSPHORIBOSYL)-5-[(5-PHOSPHORIBOSYLAMINO)METHYLIDENEAMINO] IMIDAZOLE-4-CARBOXAMIDE ISOMERASE"/>
    <property type="match status" value="1"/>
</dbReference>
<dbReference type="Pfam" id="PF00977">
    <property type="entry name" value="His_biosynth"/>
    <property type="match status" value="1"/>
</dbReference>
<dbReference type="SUPFAM" id="SSF51366">
    <property type="entry name" value="Ribulose-phoshate binding barrel"/>
    <property type="match status" value="1"/>
</dbReference>
<reference key="1">
    <citation type="journal article" date="2009" name="J. Bacteriol.">
        <title>Complete genome sequence of Rhodobacter sphaeroides KD131.</title>
        <authorList>
            <person name="Lim S.-K."/>
            <person name="Kim S.J."/>
            <person name="Cha S.H."/>
            <person name="Oh Y.-K."/>
            <person name="Rhee H.-J."/>
            <person name="Kim M.-S."/>
            <person name="Lee J.K."/>
        </authorList>
    </citation>
    <scope>NUCLEOTIDE SEQUENCE [LARGE SCALE GENOMIC DNA]</scope>
    <source>
        <strain>KD131 / KCTC 12085</strain>
    </source>
</reference>
<sequence length="239" mass="24548">MILYPAIDLKDGQCVRLLRGEMEAATVFGDDPAAQAAAFEAAGCEWVHLVDLNGAFAGRPVNAAAVEAILARIAVPAQLGGGIRDMATIALWLEKGLARVILGTVAVENPGLVREAARAFPGRVAVGIDARKGRVATKGWATETDVMATDLARSFEDAGVAAIIYTDIDRDGAMAGPNIEATDALARAVSIPVIASGGVSSLADLLALRDTGSIAGAISGRALYDGALDLTQALQALRT</sequence>
<keyword id="KW-0028">Amino-acid biosynthesis</keyword>
<keyword id="KW-0963">Cytoplasm</keyword>
<keyword id="KW-0368">Histidine biosynthesis</keyword>
<keyword id="KW-0413">Isomerase</keyword>
<accession>B9KPC9</accession>
<evidence type="ECO:0000255" key="1">
    <source>
        <dbReference type="HAMAP-Rule" id="MF_01014"/>
    </source>
</evidence>
<feature type="chain" id="PRO_1000148985" description="1-(5-phosphoribosyl)-5-[(5-phosphoribosylamino)methylideneamino] imidazole-4-carboxamide isomerase">
    <location>
        <begin position="1"/>
        <end position="239"/>
    </location>
</feature>
<feature type="active site" description="Proton acceptor" evidence="1">
    <location>
        <position position="8"/>
    </location>
</feature>
<feature type="active site" description="Proton donor" evidence="1">
    <location>
        <position position="129"/>
    </location>
</feature>
<comment type="catalytic activity">
    <reaction evidence="1">
        <text>1-(5-phospho-beta-D-ribosyl)-5-[(5-phospho-beta-D-ribosylamino)methylideneamino]imidazole-4-carboxamide = 5-[(5-phospho-1-deoxy-D-ribulos-1-ylimino)methylamino]-1-(5-phospho-beta-D-ribosyl)imidazole-4-carboxamide</text>
        <dbReference type="Rhea" id="RHEA:15469"/>
        <dbReference type="ChEBI" id="CHEBI:58435"/>
        <dbReference type="ChEBI" id="CHEBI:58525"/>
        <dbReference type="EC" id="5.3.1.16"/>
    </reaction>
</comment>
<comment type="pathway">
    <text evidence="1">Amino-acid biosynthesis; L-histidine biosynthesis; L-histidine from 5-phospho-alpha-D-ribose 1-diphosphate: step 4/9.</text>
</comment>
<comment type="subcellular location">
    <subcellularLocation>
        <location evidence="1">Cytoplasm</location>
    </subcellularLocation>
</comment>
<comment type="similarity">
    <text evidence="1">Belongs to the HisA/HisF family.</text>
</comment>
<proteinExistence type="inferred from homology"/>